<sequence>MAQKTETAIPSNSKARFETLYREKVTKALSERFGYKNVMNIPRLQKISINIGVGEAASEPKLLETAIQELAQITGQKPQIRKSKKAISNFKLREGQAIGCRVTLRRKAMYEFFDRFVSLAVPRIRDFRGLSDTSFDGRGNYTIGVREQIIFPEIDIDKIPKICGMDISFVTSAKTDEEAYVLLAELGMPFKKKN</sequence>
<feature type="chain" id="PRO_0000243037" description="Large ribosomal subunit protein uL5">
    <location>
        <begin position="1"/>
        <end position="194"/>
    </location>
</feature>
<accession>Q3B6F0</accession>
<keyword id="KW-1185">Reference proteome</keyword>
<keyword id="KW-0687">Ribonucleoprotein</keyword>
<keyword id="KW-0689">Ribosomal protein</keyword>
<keyword id="KW-0694">RNA-binding</keyword>
<keyword id="KW-0699">rRNA-binding</keyword>
<keyword id="KW-0820">tRNA-binding</keyword>
<name>RL5_CHLL3</name>
<protein>
    <recommendedName>
        <fullName evidence="1">Large ribosomal subunit protein uL5</fullName>
    </recommendedName>
    <alternativeName>
        <fullName evidence="2">50S ribosomal protein L5</fullName>
    </alternativeName>
</protein>
<comment type="function">
    <text evidence="1">This is one of the proteins that bind and probably mediate the attachment of the 5S RNA into the large ribosomal subunit, where it forms part of the central protuberance. In the 70S ribosome it contacts protein S13 of the 30S subunit (bridge B1b), connecting the 2 subunits; this bridge is implicated in subunit movement. Contacts the P site tRNA; the 5S rRNA and some of its associated proteins might help stabilize positioning of ribosome-bound tRNAs.</text>
</comment>
<comment type="subunit">
    <text evidence="1">Part of the 50S ribosomal subunit; part of the 5S rRNA/L5/L18/L25 subcomplex. Contacts the 5S rRNA and the P site tRNA. Forms a bridge to the 30S subunit in the 70S ribosome.</text>
</comment>
<comment type="similarity">
    <text evidence="1">Belongs to the universal ribosomal protein uL5 family.</text>
</comment>
<gene>
    <name evidence="1" type="primary">rplE</name>
    <name type="ordered locus">Plut_0193</name>
</gene>
<dbReference type="EMBL" id="CP000096">
    <property type="protein sequence ID" value="ABB23081.1"/>
    <property type="molecule type" value="Genomic_DNA"/>
</dbReference>
<dbReference type="RefSeq" id="WP_011356957.1">
    <property type="nucleotide sequence ID" value="NC_007512.1"/>
</dbReference>
<dbReference type="SMR" id="Q3B6F0"/>
<dbReference type="STRING" id="319225.Plut_0193"/>
<dbReference type="KEGG" id="plt:Plut_0193"/>
<dbReference type="eggNOG" id="COG0094">
    <property type="taxonomic scope" value="Bacteria"/>
</dbReference>
<dbReference type="HOGENOM" id="CLU_061015_2_1_10"/>
<dbReference type="OrthoDB" id="9806626at2"/>
<dbReference type="Proteomes" id="UP000002709">
    <property type="component" value="Chromosome"/>
</dbReference>
<dbReference type="GO" id="GO:1990904">
    <property type="term" value="C:ribonucleoprotein complex"/>
    <property type="evidence" value="ECO:0007669"/>
    <property type="project" value="UniProtKB-KW"/>
</dbReference>
<dbReference type="GO" id="GO:0005840">
    <property type="term" value="C:ribosome"/>
    <property type="evidence" value="ECO:0007669"/>
    <property type="project" value="UniProtKB-KW"/>
</dbReference>
<dbReference type="GO" id="GO:0019843">
    <property type="term" value="F:rRNA binding"/>
    <property type="evidence" value="ECO:0007669"/>
    <property type="project" value="UniProtKB-UniRule"/>
</dbReference>
<dbReference type="GO" id="GO:0003735">
    <property type="term" value="F:structural constituent of ribosome"/>
    <property type="evidence" value="ECO:0007669"/>
    <property type="project" value="InterPro"/>
</dbReference>
<dbReference type="GO" id="GO:0000049">
    <property type="term" value="F:tRNA binding"/>
    <property type="evidence" value="ECO:0007669"/>
    <property type="project" value="UniProtKB-UniRule"/>
</dbReference>
<dbReference type="GO" id="GO:0006412">
    <property type="term" value="P:translation"/>
    <property type="evidence" value="ECO:0007669"/>
    <property type="project" value="UniProtKB-UniRule"/>
</dbReference>
<dbReference type="FunFam" id="3.30.1440.10:FF:000001">
    <property type="entry name" value="50S ribosomal protein L5"/>
    <property type="match status" value="1"/>
</dbReference>
<dbReference type="Gene3D" id="3.30.1440.10">
    <property type="match status" value="1"/>
</dbReference>
<dbReference type="HAMAP" id="MF_01333_B">
    <property type="entry name" value="Ribosomal_uL5_B"/>
    <property type="match status" value="1"/>
</dbReference>
<dbReference type="InterPro" id="IPR002132">
    <property type="entry name" value="Ribosomal_uL5"/>
</dbReference>
<dbReference type="InterPro" id="IPR020930">
    <property type="entry name" value="Ribosomal_uL5_bac-type"/>
</dbReference>
<dbReference type="InterPro" id="IPR031309">
    <property type="entry name" value="Ribosomal_uL5_C"/>
</dbReference>
<dbReference type="InterPro" id="IPR022803">
    <property type="entry name" value="Ribosomal_uL5_dom_sf"/>
</dbReference>
<dbReference type="InterPro" id="IPR031310">
    <property type="entry name" value="Ribosomal_uL5_N"/>
</dbReference>
<dbReference type="NCBIfam" id="NF000585">
    <property type="entry name" value="PRK00010.1"/>
    <property type="match status" value="1"/>
</dbReference>
<dbReference type="PANTHER" id="PTHR11994">
    <property type="entry name" value="60S RIBOSOMAL PROTEIN L11-RELATED"/>
    <property type="match status" value="1"/>
</dbReference>
<dbReference type="Pfam" id="PF00281">
    <property type="entry name" value="Ribosomal_L5"/>
    <property type="match status" value="1"/>
</dbReference>
<dbReference type="Pfam" id="PF00673">
    <property type="entry name" value="Ribosomal_L5_C"/>
    <property type="match status" value="1"/>
</dbReference>
<dbReference type="PIRSF" id="PIRSF002161">
    <property type="entry name" value="Ribosomal_L5"/>
    <property type="match status" value="1"/>
</dbReference>
<dbReference type="SUPFAM" id="SSF55282">
    <property type="entry name" value="RL5-like"/>
    <property type="match status" value="1"/>
</dbReference>
<organism>
    <name type="scientific">Chlorobium luteolum (strain DSM 273 / BCRC 81028 / 2530)</name>
    <name type="common">Pelodictyon luteolum</name>
    <dbReference type="NCBI Taxonomy" id="319225"/>
    <lineage>
        <taxon>Bacteria</taxon>
        <taxon>Pseudomonadati</taxon>
        <taxon>Chlorobiota</taxon>
        <taxon>Chlorobiia</taxon>
        <taxon>Chlorobiales</taxon>
        <taxon>Chlorobiaceae</taxon>
        <taxon>Chlorobium/Pelodictyon group</taxon>
        <taxon>Pelodictyon</taxon>
    </lineage>
</organism>
<evidence type="ECO:0000255" key="1">
    <source>
        <dbReference type="HAMAP-Rule" id="MF_01333"/>
    </source>
</evidence>
<evidence type="ECO:0000305" key="2"/>
<proteinExistence type="inferred from homology"/>
<reference key="1">
    <citation type="submission" date="2005-08" db="EMBL/GenBank/DDBJ databases">
        <title>Complete sequence of Pelodictyon luteolum DSM 273.</title>
        <authorList>
            <consortium name="US DOE Joint Genome Institute"/>
            <person name="Copeland A."/>
            <person name="Lucas S."/>
            <person name="Lapidus A."/>
            <person name="Barry K."/>
            <person name="Detter J.C."/>
            <person name="Glavina T."/>
            <person name="Hammon N."/>
            <person name="Israni S."/>
            <person name="Pitluck S."/>
            <person name="Bryant D."/>
            <person name="Schmutz J."/>
            <person name="Larimer F."/>
            <person name="Land M."/>
            <person name="Kyrpides N."/>
            <person name="Ivanova N."/>
            <person name="Richardson P."/>
        </authorList>
    </citation>
    <scope>NUCLEOTIDE SEQUENCE [LARGE SCALE GENOMIC DNA]</scope>
    <source>
        <strain>DSM 273 / BCRC 81028 / 2530</strain>
    </source>
</reference>